<name>HIS7_SINMW</name>
<protein>
    <recommendedName>
        <fullName evidence="1">Imidazoleglycerol-phosphate dehydratase</fullName>
        <shortName evidence="1">IGPD</shortName>
        <ecNumber evidence="1">4.2.1.19</ecNumber>
    </recommendedName>
</protein>
<feature type="chain" id="PRO_1000010352" description="Imidazoleglycerol-phosphate dehydratase">
    <location>
        <begin position="1"/>
        <end position="202"/>
    </location>
</feature>
<sequence length="202" mass="21840">MADVTPSRTGQVSRKTNETAVSVALDVEGTGSSKIVTGVGFFDHMLDQLSRHSLIDMDIKAEGDLHVDDHHTVEDTGIAIGQALAKALGDRRGITRYASIDLAMDETMTRAAVDVSGRPFLVWNVAFTAPKIGTFDTELVREFFQALAQHAGITLHVQNIYGANNHHIAETCFKSVARVLRTATEIDPRQAGRVPSTKGTLA</sequence>
<gene>
    <name evidence="1" type="primary">hisB</name>
    <name type="ordered locus">Smed_3263</name>
</gene>
<accession>A6UEK7</accession>
<reference key="1">
    <citation type="submission" date="2007-06" db="EMBL/GenBank/DDBJ databases">
        <title>Complete sequence of Sinorhizobium medicae WSM419 chromosome.</title>
        <authorList>
            <consortium name="US DOE Joint Genome Institute"/>
            <person name="Copeland A."/>
            <person name="Lucas S."/>
            <person name="Lapidus A."/>
            <person name="Barry K."/>
            <person name="Glavina del Rio T."/>
            <person name="Dalin E."/>
            <person name="Tice H."/>
            <person name="Pitluck S."/>
            <person name="Chain P."/>
            <person name="Malfatti S."/>
            <person name="Shin M."/>
            <person name="Vergez L."/>
            <person name="Schmutz J."/>
            <person name="Larimer F."/>
            <person name="Land M."/>
            <person name="Hauser L."/>
            <person name="Kyrpides N."/>
            <person name="Mikhailova N."/>
            <person name="Reeve W.G."/>
            <person name="Richardson P."/>
        </authorList>
    </citation>
    <scope>NUCLEOTIDE SEQUENCE [LARGE SCALE GENOMIC DNA]</scope>
    <source>
        <strain>WSM419</strain>
    </source>
</reference>
<keyword id="KW-0028">Amino-acid biosynthesis</keyword>
<keyword id="KW-0963">Cytoplasm</keyword>
<keyword id="KW-0368">Histidine biosynthesis</keyword>
<keyword id="KW-0456">Lyase</keyword>
<dbReference type="EC" id="4.2.1.19" evidence="1"/>
<dbReference type="EMBL" id="CP000738">
    <property type="protein sequence ID" value="ABR62087.1"/>
    <property type="molecule type" value="Genomic_DNA"/>
</dbReference>
<dbReference type="RefSeq" id="WP_012067468.1">
    <property type="nucleotide sequence ID" value="NC_009636.1"/>
</dbReference>
<dbReference type="RefSeq" id="YP_001328922.1">
    <property type="nucleotide sequence ID" value="NC_009636.1"/>
</dbReference>
<dbReference type="SMR" id="A6UEK7"/>
<dbReference type="STRING" id="366394.Smed_3263"/>
<dbReference type="GeneID" id="61610845"/>
<dbReference type="KEGG" id="smd:Smed_3263"/>
<dbReference type="PATRIC" id="fig|366394.8.peg.6503"/>
<dbReference type="eggNOG" id="COG0131">
    <property type="taxonomic scope" value="Bacteria"/>
</dbReference>
<dbReference type="HOGENOM" id="CLU_044308_3_0_5"/>
<dbReference type="OrthoDB" id="9813612at2"/>
<dbReference type="UniPathway" id="UPA00031">
    <property type="reaction ID" value="UER00011"/>
</dbReference>
<dbReference type="Proteomes" id="UP000001108">
    <property type="component" value="Chromosome"/>
</dbReference>
<dbReference type="GO" id="GO:0005737">
    <property type="term" value="C:cytoplasm"/>
    <property type="evidence" value="ECO:0007669"/>
    <property type="project" value="UniProtKB-SubCell"/>
</dbReference>
<dbReference type="GO" id="GO:0004424">
    <property type="term" value="F:imidazoleglycerol-phosphate dehydratase activity"/>
    <property type="evidence" value="ECO:0007669"/>
    <property type="project" value="UniProtKB-UniRule"/>
</dbReference>
<dbReference type="GO" id="GO:0000105">
    <property type="term" value="P:L-histidine biosynthetic process"/>
    <property type="evidence" value="ECO:0007669"/>
    <property type="project" value="UniProtKB-UniRule"/>
</dbReference>
<dbReference type="CDD" id="cd07914">
    <property type="entry name" value="IGPD"/>
    <property type="match status" value="1"/>
</dbReference>
<dbReference type="FunFam" id="3.30.230.40:FF:000001">
    <property type="entry name" value="Imidazoleglycerol-phosphate dehydratase HisB"/>
    <property type="match status" value="1"/>
</dbReference>
<dbReference type="FunFam" id="3.30.230.40:FF:000003">
    <property type="entry name" value="Imidazoleglycerol-phosphate dehydratase HisB"/>
    <property type="match status" value="1"/>
</dbReference>
<dbReference type="Gene3D" id="3.30.230.40">
    <property type="entry name" value="Imidazole glycerol phosphate dehydratase, domain 1"/>
    <property type="match status" value="2"/>
</dbReference>
<dbReference type="HAMAP" id="MF_00076">
    <property type="entry name" value="HisB"/>
    <property type="match status" value="1"/>
</dbReference>
<dbReference type="InterPro" id="IPR038494">
    <property type="entry name" value="IGPD_sf"/>
</dbReference>
<dbReference type="InterPro" id="IPR000807">
    <property type="entry name" value="ImidazoleglycerolP_deHydtase"/>
</dbReference>
<dbReference type="InterPro" id="IPR020565">
    <property type="entry name" value="ImidazoleglycerP_deHydtase_CS"/>
</dbReference>
<dbReference type="InterPro" id="IPR020568">
    <property type="entry name" value="Ribosomal_Su5_D2-typ_SF"/>
</dbReference>
<dbReference type="NCBIfam" id="NF002109">
    <property type="entry name" value="PRK00951.1-5"/>
    <property type="match status" value="1"/>
</dbReference>
<dbReference type="NCBIfam" id="NF002111">
    <property type="entry name" value="PRK00951.2-1"/>
    <property type="match status" value="1"/>
</dbReference>
<dbReference type="NCBIfam" id="NF002114">
    <property type="entry name" value="PRK00951.2-4"/>
    <property type="match status" value="1"/>
</dbReference>
<dbReference type="PANTHER" id="PTHR23133:SF2">
    <property type="entry name" value="IMIDAZOLEGLYCEROL-PHOSPHATE DEHYDRATASE"/>
    <property type="match status" value="1"/>
</dbReference>
<dbReference type="PANTHER" id="PTHR23133">
    <property type="entry name" value="IMIDAZOLEGLYCEROL-PHOSPHATE DEHYDRATASE HIS7"/>
    <property type="match status" value="1"/>
</dbReference>
<dbReference type="Pfam" id="PF00475">
    <property type="entry name" value="IGPD"/>
    <property type="match status" value="1"/>
</dbReference>
<dbReference type="SUPFAM" id="SSF54211">
    <property type="entry name" value="Ribosomal protein S5 domain 2-like"/>
    <property type="match status" value="2"/>
</dbReference>
<dbReference type="PROSITE" id="PS00954">
    <property type="entry name" value="IGP_DEHYDRATASE_1"/>
    <property type="match status" value="1"/>
</dbReference>
<dbReference type="PROSITE" id="PS00955">
    <property type="entry name" value="IGP_DEHYDRATASE_2"/>
    <property type="match status" value="1"/>
</dbReference>
<comment type="catalytic activity">
    <reaction evidence="1">
        <text>D-erythro-1-(imidazol-4-yl)glycerol 3-phosphate = 3-(imidazol-4-yl)-2-oxopropyl phosphate + H2O</text>
        <dbReference type="Rhea" id="RHEA:11040"/>
        <dbReference type="ChEBI" id="CHEBI:15377"/>
        <dbReference type="ChEBI" id="CHEBI:57766"/>
        <dbReference type="ChEBI" id="CHEBI:58278"/>
        <dbReference type="EC" id="4.2.1.19"/>
    </reaction>
</comment>
<comment type="pathway">
    <text evidence="1">Amino-acid biosynthesis; L-histidine biosynthesis; L-histidine from 5-phospho-alpha-D-ribose 1-diphosphate: step 6/9.</text>
</comment>
<comment type="subcellular location">
    <subcellularLocation>
        <location evidence="1">Cytoplasm</location>
    </subcellularLocation>
</comment>
<comment type="similarity">
    <text evidence="1">Belongs to the imidazoleglycerol-phosphate dehydratase family.</text>
</comment>
<evidence type="ECO:0000255" key="1">
    <source>
        <dbReference type="HAMAP-Rule" id="MF_00076"/>
    </source>
</evidence>
<organism>
    <name type="scientific">Sinorhizobium medicae (strain WSM419)</name>
    <name type="common">Ensifer medicae</name>
    <dbReference type="NCBI Taxonomy" id="366394"/>
    <lineage>
        <taxon>Bacteria</taxon>
        <taxon>Pseudomonadati</taxon>
        <taxon>Pseudomonadota</taxon>
        <taxon>Alphaproteobacteria</taxon>
        <taxon>Hyphomicrobiales</taxon>
        <taxon>Rhizobiaceae</taxon>
        <taxon>Sinorhizobium/Ensifer group</taxon>
        <taxon>Sinorhizobium</taxon>
    </lineage>
</organism>
<proteinExistence type="inferred from homology"/>